<feature type="chain" id="PRO_0000391478" description="Protein 2">
    <location>
        <begin position="1"/>
        <end position="333"/>
    </location>
</feature>
<feature type="region of interest" description="Disordered" evidence="1">
    <location>
        <begin position="1"/>
        <end position="41"/>
    </location>
</feature>
<feature type="region of interest" description="Disordered" evidence="1">
    <location>
        <begin position="57"/>
        <end position="84"/>
    </location>
</feature>
<feature type="compositionally biased region" description="Polar residues" evidence="1">
    <location>
        <begin position="24"/>
        <end position="33"/>
    </location>
</feature>
<feature type="compositionally biased region" description="Acidic residues" evidence="1">
    <location>
        <begin position="62"/>
        <end position="79"/>
    </location>
</feature>
<protein>
    <recommendedName>
        <fullName>Protein 2</fullName>
    </recommendedName>
</protein>
<accession>Q68Y31</accession>
<organismHost>
    <name type="scientific">Lactuca sativa</name>
    <name type="common">Garden lettuce</name>
    <dbReference type="NCBI Taxonomy" id="4236"/>
</organismHost>
<organismHost>
    <name type="scientific">Sonchus asper</name>
    <name type="common">Spiny sowthistle</name>
    <name type="synonym">Sonchus oleraceus var. asper</name>
    <dbReference type="NCBI Taxonomy" id="50193"/>
</organismHost>
<organismHost>
    <name type="scientific">Sonchus oleraceus</name>
    <name type="common">Common sowthistle</name>
    <dbReference type="NCBI Taxonomy" id="50207"/>
</organismHost>
<evidence type="ECO:0000256" key="1">
    <source>
        <dbReference type="SAM" id="MobiDB-lite"/>
    </source>
</evidence>
<sequence>MTGRFVRDQSAMTKAIASSGKAGQETTKQTTSAEKLESENALLSTVKEMNQGWMSRLGAGNDYDETEADPADTYGDTEADLPPTIKPEHIKKETRKQDKALGIKNVAGTSESERKALKQWDEDENKSDTEKLAFLAGFRYRQDHNSVVLRAQTEQLKSLVDILTSSATSVSRAASDIVNATTMSTSKLAAAITKHIEVPPHETLTKIEMPKLPLISSEAGSISGVKSVDGKSVDEEIIDSNKKESTRIKEEAKTPKPQIVTPPVIDSGPIITVGQMASVLGGEVKDILEFYEIGMEKFESVAKDLGLSYEGLLRKYGGLSGLKGTLKKKINLL</sequence>
<dbReference type="EMBL" id="AB114138">
    <property type="protein sequence ID" value="BAD36831.1"/>
    <property type="molecule type" value="Genomic_RNA"/>
</dbReference>
<dbReference type="KEGG" id="vg:7042931"/>
<dbReference type="Proteomes" id="UP000008154">
    <property type="component" value="Genome"/>
</dbReference>
<proteinExistence type="predicted"/>
<organism>
    <name type="scientific">Lettuce big-vein associated virus (isolate Japan/Kagawa)</name>
    <name type="common">LBVaV</name>
    <dbReference type="NCBI Taxonomy" id="652962"/>
    <lineage>
        <taxon>Viruses</taxon>
        <taxon>Riboviria</taxon>
        <taxon>Orthornavirae</taxon>
        <taxon>Negarnaviricota</taxon>
        <taxon>Haploviricotina</taxon>
        <taxon>Monjiviricetes</taxon>
        <taxon>Mononegavirales</taxon>
        <taxon>Rhabdoviridae</taxon>
        <taxon>Betarhabdovirinae</taxon>
        <taxon>Varicosavirus</taxon>
        <taxon>Varicosavirus lactucae</taxon>
    </lineage>
</organism>
<keyword id="KW-1185">Reference proteome</keyword>
<name>VP2_LBVAV</name>
<reference key="1">
    <citation type="journal article" date="2004" name="J. Gen. Virol.">
        <title>Nucleotide sequence of RNA2 of Lettuce big-vein virus and evidence for a possible transcription termination/initiation strategy similar to that of rhabdoviruses.</title>
        <authorList>
            <person name="Sasaya T."/>
            <person name="Kusaba S."/>
            <person name="Ishikawa K."/>
            <person name="Koganezawa H."/>
        </authorList>
    </citation>
    <scope>NUCLEOTIDE SEQUENCE [GENOMIC RNA]</scope>
</reference>